<reference key="1">
    <citation type="submission" date="2009-04" db="EMBL/GenBank/DDBJ databases">
        <title>Genome sequence of Bacillus anthracis A0248.</title>
        <authorList>
            <person name="Dodson R.J."/>
            <person name="Munk A.C."/>
            <person name="Bruce D."/>
            <person name="Detter C."/>
            <person name="Tapia R."/>
            <person name="Sutton G."/>
            <person name="Sims D."/>
            <person name="Brettin T."/>
        </authorList>
    </citation>
    <scope>NUCLEOTIDE SEQUENCE [LARGE SCALE GENOMIC DNA]</scope>
    <source>
        <strain>A0248</strain>
    </source>
</reference>
<gene>
    <name evidence="1" type="primary">dnaA</name>
    <name type="ordered locus">BAA_0001</name>
</gene>
<proteinExistence type="inferred from homology"/>
<feature type="chain" id="PRO_1000189778" description="Chromosomal replication initiator protein DnaA">
    <location>
        <begin position="1"/>
        <end position="446"/>
    </location>
</feature>
<feature type="region of interest" description="Domain I, interacts with DnaA modulators" evidence="1">
    <location>
        <begin position="1"/>
        <end position="92"/>
    </location>
</feature>
<feature type="region of interest" description="Domain II" evidence="1">
    <location>
        <begin position="93"/>
        <end position="109"/>
    </location>
</feature>
<feature type="region of interest" description="Domain III, AAA+ region" evidence="1">
    <location>
        <begin position="110"/>
        <end position="326"/>
    </location>
</feature>
<feature type="region of interest" description="Domain IV, binds dsDNA" evidence="1">
    <location>
        <begin position="327"/>
        <end position="446"/>
    </location>
</feature>
<feature type="binding site" evidence="1">
    <location>
        <position position="154"/>
    </location>
    <ligand>
        <name>ATP</name>
        <dbReference type="ChEBI" id="CHEBI:30616"/>
    </ligand>
</feature>
<feature type="binding site" evidence="1">
    <location>
        <position position="156"/>
    </location>
    <ligand>
        <name>ATP</name>
        <dbReference type="ChEBI" id="CHEBI:30616"/>
    </ligand>
</feature>
<feature type="binding site" evidence="1">
    <location>
        <position position="157"/>
    </location>
    <ligand>
        <name>ATP</name>
        <dbReference type="ChEBI" id="CHEBI:30616"/>
    </ligand>
</feature>
<feature type="binding site" evidence="1">
    <location>
        <position position="158"/>
    </location>
    <ligand>
        <name>ATP</name>
        <dbReference type="ChEBI" id="CHEBI:30616"/>
    </ligand>
</feature>
<name>DNAA_BACAA</name>
<keyword id="KW-0067">ATP-binding</keyword>
<keyword id="KW-0963">Cytoplasm</keyword>
<keyword id="KW-0235">DNA replication</keyword>
<keyword id="KW-0238">DNA-binding</keyword>
<keyword id="KW-0446">Lipid-binding</keyword>
<keyword id="KW-0547">Nucleotide-binding</keyword>
<protein>
    <recommendedName>
        <fullName evidence="1">Chromosomal replication initiator protein DnaA</fullName>
    </recommendedName>
</protein>
<accession>C3P8P5</accession>
<evidence type="ECO:0000255" key="1">
    <source>
        <dbReference type="HAMAP-Rule" id="MF_00377"/>
    </source>
</evidence>
<sequence length="446" mass="50495">MENISDLWNSALKELEKKVSKPSYETWLKSTTAHNLKKDVLTITAPNEFARDWLESHYSELISETLYDLTGAKLAIRFIIPQSQAEEEIDLPPAKPNAAQDDSNHLPQSMLNPKYTFDTFVIGSGNRFAHAASLAVAEAPAKAYNPLFIYGGVGLGKTHLMHAIGHYVIEHNPNAKVVYLSSEKFTNEFINSIRDNKAVDFRNKYRNVDVLLIDDIQFLAGKEQTQEEFFHTFNALHEESKQIVISSDRPPKEIPTLEDRLRSRFEWGLITDITPPDLETRIAILRKKAKAEGLDIPNEVMLYIANQIDSNIRELEGALIRVVAYSSLINKDINADLAAEALKDIIPNSKPKIISIYDIQKAVGDVYQVKLEDFKAKKRTKSVAFPRQIAMYLSRELTDSSLPKIGEEFGGRDHTTVIHAHEKISKLLKTDTQLQKQVEEINDILK</sequence>
<dbReference type="EMBL" id="CP001598">
    <property type="protein sequence ID" value="ACQ46614.1"/>
    <property type="molecule type" value="Genomic_DNA"/>
</dbReference>
<dbReference type="RefSeq" id="WP_000428021.1">
    <property type="nucleotide sequence ID" value="NC_012659.1"/>
</dbReference>
<dbReference type="SMR" id="C3P8P5"/>
<dbReference type="GeneID" id="45020035"/>
<dbReference type="KEGG" id="bai:BAA_0001"/>
<dbReference type="HOGENOM" id="CLU_026910_3_1_9"/>
<dbReference type="GO" id="GO:0005737">
    <property type="term" value="C:cytoplasm"/>
    <property type="evidence" value="ECO:0007669"/>
    <property type="project" value="UniProtKB-SubCell"/>
</dbReference>
<dbReference type="GO" id="GO:0005886">
    <property type="term" value="C:plasma membrane"/>
    <property type="evidence" value="ECO:0007669"/>
    <property type="project" value="TreeGrafter"/>
</dbReference>
<dbReference type="GO" id="GO:0005524">
    <property type="term" value="F:ATP binding"/>
    <property type="evidence" value="ECO:0007669"/>
    <property type="project" value="UniProtKB-UniRule"/>
</dbReference>
<dbReference type="GO" id="GO:0016887">
    <property type="term" value="F:ATP hydrolysis activity"/>
    <property type="evidence" value="ECO:0007669"/>
    <property type="project" value="InterPro"/>
</dbReference>
<dbReference type="GO" id="GO:0003688">
    <property type="term" value="F:DNA replication origin binding"/>
    <property type="evidence" value="ECO:0007669"/>
    <property type="project" value="UniProtKB-UniRule"/>
</dbReference>
<dbReference type="GO" id="GO:0008289">
    <property type="term" value="F:lipid binding"/>
    <property type="evidence" value="ECO:0007669"/>
    <property type="project" value="UniProtKB-KW"/>
</dbReference>
<dbReference type="GO" id="GO:0006270">
    <property type="term" value="P:DNA replication initiation"/>
    <property type="evidence" value="ECO:0007669"/>
    <property type="project" value="UniProtKB-UniRule"/>
</dbReference>
<dbReference type="GO" id="GO:0006275">
    <property type="term" value="P:regulation of DNA replication"/>
    <property type="evidence" value="ECO:0007669"/>
    <property type="project" value="UniProtKB-UniRule"/>
</dbReference>
<dbReference type="CDD" id="cd00009">
    <property type="entry name" value="AAA"/>
    <property type="match status" value="1"/>
</dbReference>
<dbReference type="CDD" id="cd06571">
    <property type="entry name" value="Bac_DnaA_C"/>
    <property type="match status" value="1"/>
</dbReference>
<dbReference type="FunFam" id="1.10.1750.10:FF:000003">
    <property type="entry name" value="Chromosomal replication initiator protein DnaA"/>
    <property type="match status" value="1"/>
</dbReference>
<dbReference type="FunFam" id="1.10.8.60:FF:000003">
    <property type="entry name" value="Chromosomal replication initiator protein DnaA"/>
    <property type="match status" value="1"/>
</dbReference>
<dbReference type="FunFam" id="3.30.300.180:FF:000002">
    <property type="entry name" value="Chromosomal replication initiator protein DnaA"/>
    <property type="match status" value="1"/>
</dbReference>
<dbReference type="FunFam" id="3.40.50.300:FF:000150">
    <property type="entry name" value="Chromosomal replication initiator protein DnaA"/>
    <property type="match status" value="1"/>
</dbReference>
<dbReference type="Gene3D" id="1.10.1750.10">
    <property type="match status" value="1"/>
</dbReference>
<dbReference type="Gene3D" id="1.10.8.60">
    <property type="match status" value="1"/>
</dbReference>
<dbReference type="Gene3D" id="3.30.300.180">
    <property type="match status" value="1"/>
</dbReference>
<dbReference type="Gene3D" id="3.40.50.300">
    <property type="entry name" value="P-loop containing nucleotide triphosphate hydrolases"/>
    <property type="match status" value="1"/>
</dbReference>
<dbReference type="HAMAP" id="MF_00377">
    <property type="entry name" value="DnaA_bact"/>
    <property type="match status" value="1"/>
</dbReference>
<dbReference type="InterPro" id="IPR003593">
    <property type="entry name" value="AAA+_ATPase"/>
</dbReference>
<dbReference type="InterPro" id="IPR001957">
    <property type="entry name" value="Chromosome_initiator_DnaA"/>
</dbReference>
<dbReference type="InterPro" id="IPR020591">
    <property type="entry name" value="Chromosome_initiator_DnaA-like"/>
</dbReference>
<dbReference type="InterPro" id="IPR018312">
    <property type="entry name" value="Chromosome_initiator_DnaA_CS"/>
</dbReference>
<dbReference type="InterPro" id="IPR013159">
    <property type="entry name" value="DnaA_C"/>
</dbReference>
<dbReference type="InterPro" id="IPR013317">
    <property type="entry name" value="DnaA_dom"/>
</dbReference>
<dbReference type="InterPro" id="IPR024633">
    <property type="entry name" value="DnaA_N_dom"/>
</dbReference>
<dbReference type="InterPro" id="IPR038454">
    <property type="entry name" value="DnaA_N_sf"/>
</dbReference>
<dbReference type="InterPro" id="IPR027417">
    <property type="entry name" value="P-loop_NTPase"/>
</dbReference>
<dbReference type="InterPro" id="IPR010921">
    <property type="entry name" value="Trp_repressor/repl_initiator"/>
</dbReference>
<dbReference type="NCBIfam" id="TIGR00362">
    <property type="entry name" value="DnaA"/>
    <property type="match status" value="1"/>
</dbReference>
<dbReference type="NCBIfam" id="NF010686">
    <property type="entry name" value="PRK14086.1"/>
    <property type="match status" value="1"/>
</dbReference>
<dbReference type="PANTHER" id="PTHR30050">
    <property type="entry name" value="CHROMOSOMAL REPLICATION INITIATOR PROTEIN DNAA"/>
    <property type="match status" value="1"/>
</dbReference>
<dbReference type="PANTHER" id="PTHR30050:SF2">
    <property type="entry name" value="CHROMOSOMAL REPLICATION INITIATOR PROTEIN DNAA"/>
    <property type="match status" value="1"/>
</dbReference>
<dbReference type="Pfam" id="PF00308">
    <property type="entry name" value="Bac_DnaA"/>
    <property type="match status" value="1"/>
</dbReference>
<dbReference type="Pfam" id="PF08299">
    <property type="entry name" value="Bac_DnaA_C"/>
    <property type="match status" value="1"/>
</dbReference>
<dbReference type="Pfam" id="PF11638">
    <property type="entry name" value="DnaA_N"/>
    <property type="match status" value="1"/>
</dbReference>
<dbReference type="PRINTS" id="PR00051">
    <property type="entry name" value="DNAA"/>
</dbReference>
<dbReference type="SMART" id="SM00382">
    <property type="entry name" value="AAA"/>
    <property type="match status" value="1"/>
</dbReference>
<dbReference type="SMART" id="SM00760">
    <property type="entry name" value="Bac_DnaA_C"/>
    <property type="match status" value="1"/>
</dbReference>
<dbReference type="SUPFAM" id="SSF52540">
    <property type="entry name" value="P-loop containing nucleoside triphosphate hydrolases"/>
    <property type="match status" value="1"/>
</dbReference>
<dbReference type="SUPFAM" id="SSF48295">
    <property type="entry name" value="TrpR-like"/>
    <property type="match status" value="1"/>
</dbReference>
<dbReference type="PROSITE" id="PS01008">
    <property type="entry name" value="DNAA"/>
    <property type="match status" value="1"/>
</dbReference>
<comment type="function">
    <text evidence="1">Plays an essential role in the initiation and regulation of chromosomal replication. ATP-DnaA binds to the origin of replication (oriC) to initiate formation of the DNA replication initiation complex once per cell cycle. Binds the DnaA box (a 9 base pair repeat at the origin) and separates the double-stranded (ds)DNA. Forms a right-handed helical filament on oriC DNA; dsDNA binds to the exterior of the filament while single-stranded (ss)DNA is stabiized in the filament's interior. The ATP-DnaA-oriC complex binds and stabilizes one strand of the AT-rich DNA unwinding element (DUE), permitting loading of DNA polymerase. After initiation quickly degrades to an ADP-DnaA complex that is not apt for DNA replication. Binds acidic phospholipids.</text>
</comment>
<comment type="subunit">
    <text evidence="1">Oligomerizes as a right-handed, spiral filament on DNA at oriC.</text>
</comment>
<comment type="subcellular location">
    <subcellularLocation>
        <location evidence="1">Cytoplasm</location>
    </subcellularLocation>
</comment>
<comment type="domain">
    <text evidence="1">Domain I is involved in oligomerization and binding regulators, domain II is flexibile and of varying length in different bacteria, domain III forms the AAA+ region, while domain IV binds dsDNA.</text>
</comment>
<comment type="similarity">
    <text evidence="1">Belongs to the DnaA family.</text>
</comment>
<organism>
    <name type="scientific">Bacillus anthracis (strain A0248)</name>
    <dbReference type="NCBI Taxonomy" id="592021"/>
    <lineage>
        <taxon>Bacteria</taxon>
        <taxon>Bacillati</taxon>
        <taxon>Bacillota</taxon>
        <taxon>Bacilli</taxon>
        <taxon>Bacillales</taxon>
        <taxon>Bacillaceae</taxon>
        <taxon>Bacillus</taxon>
        <taxon>Bacillus cereus group</taxon>
    </lineage>
</organism>